<evidence type="ECO:0000250" key="1"/>
<evidence type="ECO:0000255" key="2">
    <source>
        <dbReference type="PROSITE-ProRule" id="PRU00182"/>
    </source>
</evidence>
<evidence type="ECO:0000305" key="3"/>
<proteinExistence type="inferred from homology"/>
<protein>
    <recommendedName>
        <fullName>Uncharacterized RNA pseudouridine synthase MT1592</fullName>
        <ecNumber>5.4.99.-</ecNumber>
    </recommendedName>
    <alternativeName>
        <fullName>RNA pseudouridylate synthase</fullName>
    </alternativeName>
    <alternativeName>
        <fullName>RNA-uridine isomerase</fullName>
    </alternativeName>
</protein>
<sequence length="308" mass="33017">MADRSMPVPDGLAGMRVDTGLARLLGLSRTAAAALAEEGAVELNGVPAGKSDRLVSGALLQVRLPEAPAPLQNTPIDIEGMTILYSDDDIVAVDKPAAVAAHASVGWTGPTVLGGLAAAGYRITTSGVHERQGIVHRLDVGTSGVMVVAISERAYTVLKRAFKYRTVDKRYHALVQGHPDPSSGTIDAPIGRHRGHEWKFAITKNGRHSLTHYDTLEAFVAASLLDVHLETGRTHQIRVHFAALHHPCCGDLVYGADPKLAKRLGLDRQWLHARSLAFAHPADGRRVEIVSPYPADLQHALKILRGEG</sequence>
<feature type="chain" id="PRO_0000428145" description="Uncharacterized RNA pseudouridine synthase MT1592">
    <location>
        <begin position="1"/>
        <end position="308"/>
    </location>
</feature>
<feature type="domain" description="S4 RNA-binding" evidence="2">
    <location>
        <begin position="15"/>
        <end position="81"/>
    </location>
</feature>
<feature type="active site" evidence="1">
    <location>
        <position position="139"/>
    </location>
</feature>
<accession>P9WHQ2</accession>
<accession>L0T9Q9</accession>
<accession>P0A5T2</accession>
<accession>Q10786</accession>
<keyword id="KW-0413">Isomerase</keyword>
<keyword id="KW-1185">Reference proteome</keyword>
<keyword id="KW-0694">RNA-binding</keyword>
<dbReference type="EC" id="5.4.99.-"/>
<dbReference type="EMBL" id="AE000516">
    <property type="protein sequence ID" value="AAK45858.1"/>
    <property type="molecule type" value="Genomic_DNA"/>
</dbReference>
<dbReference type="PIR" id="A70761">
    <property type="entry name" value="A70761"/>
</dbReference>
<dbReference type="RefSeq" id="WP_003407723.1">
    <property type="nucleotide sequence ID" value="NZ_KK341227.1"/>
</dbReference>
<dbReference type="SMR" id="P9WHQ2"/>
<dbReference type="KEGG" id="mtc:MT1592"/>
<dbReference type="PATRIC" id="fig|83331.31.peg.1713"/>
<dbReference type="HOGENOM" id="CLU_016902_4_4_11"/>
<dbReference type="Proteomes" id="UP000001020">
    <property type="component" value="Chromosome"/>
</dbReference>
<dbReference type="GO" id="GO:0003723">
    <property type="term" value="F:RNA binding"/>
    <property type="evidence" value="ECO:0007669"/>
    <property type="project" value="UniProtKB-KW"/>
</dbReference>
<dbReference type="GO" id="GO:0120159">
    <property type="term" value="F:rRNA pseudouridine synthase activity"/>
    <property type="evidence" value="ECO:0007669"/>
    <property type="project" value="UniProtKB-ARBA"/>
</dbReference>
<dbReference type="GO" id="GO:0000455">
    <property type="term" value="P:enzyme-directed rRNA pseudouridine synthesis"/>
    <property type="evidence" value="ECO:0007669"/>
    <property type="project" value="TreeGrafter"/>
</dbReference>
<dbReference type="CDD" id="cd02869">
    <property type="entry name" value="PseudoU_synth_RluA_like"/>
    <property type="match status" value="1"/>
</dbReference>
<dbReference type="Gene3D" id="3.30.2350.10">
    <property type="entry name" value="Pseudouridine synthase"/>
    <property type="match status" value="1"/>
</dbReference>
<dbReference type="Gene3D" id="3.10.290.10">
    <property type="entry name" value="RNA-binding S4 domain"/>
    <property type="match status" value="1"/>
</dbReference>
<dbReference type="InterPro" id="IPR020103">
    <property type="entry name" value="PsdUridine_synth_cat_dom_sf"/>
</dbReference>
<dbReference type="InterPro" id="IPR006224">
    <property type="entry name" value="PsdUridine_synth_RluA-like_CS"/>
</dbReference>
<dbReference type="InterPro" id="IPR006225">
    <property type="entry name" value="PsdUridine_synth_RluC/D"/>
</dbReference>
<dbReference type="InterPro" id="IPR006145">
    <property type="entry name" value="PsdUridine_synth_RsuA/RluA"/>
</dbReference>
<dbReference type="InterPro" id="IPR050188">
    <property type="entry name" value="RluA_PseudoU_synthase"/>
</dbReference>
<dbReference type="InterPro" id="IPR002942">
    <property type="entry name" value="S4_RNA-bd"/>
</dbReference>
<dbReference type="InterPro" id="IPR036986">
    <property type="entry name" value="S4_RNA-bd_sf"/>
</dbReference>
<dbReference type="NCBIfam" id="TIGR00005">
    <property type="entry name" value="rluA_subfam"/>
    <property type="match status" value="1"/>
</dbReference>
<dbReference type="PANTHER" id="PTHR21600">
    <property type="entry name" value="MITOCHONDRIAL RNA PSEUDOURIDINE SYNTHASE"/>
    <property type="match status" value="1"/>
</dbReference>
<dbReference type="PANTHER" id="PTHR21600:SF44">
    <property type="entry name" value="RIBOSOMAL LARGE SUBUNIT PSEUDOURIDINE SYNTHASE D"/>
    <property type="match status" value="1"/>
</dbReference>
<dbReference type="Pfam" id="PF00849">
    <property type="entry name" value="PseudoU_synth_2"/>
    <property type="match status" value="1"/>
</dbReference>
<dbReference type="SMART" id="SM00363">
    <property type="entry name" value="S4"/>
    <property type="match status" value="1"/>
</dbReference>
<dbReference type="SUPFAM" id="SSF55174">
    <property type="entry name" value="Alpha-L RNA-binding motif"/>
    <property type="match status" value="1"/>
</dbReference>
<dbReference type="SUPFAM" id="SSF55120">
    <property type="entry name" value="Pseudouridine synthase"/>
    <property type="match status" value="1"/>
</dbReference>
<dbReference type="PROSITE" id="PS01129">
    <property type="entry name" value="PSI_RLU"/>
    <property type="match status" value="1"/>
</dbReference>
<dbReference type="PROSITE" id="PS50889">
    <property type="entry name" value="S4"/>
    <property type="match status" value="1"/>
</dbReference>
<organism>
    <name type="scientific">Mycobacterium tuberculosis (strain CDC 1551 / Oshkosh)</name>
    <dbReference type="NCBI Taxonomy" id="83331"/>
    <lineage>
        <taxon>Bacteria</taxon>
        <taxon>Bacillati</taxon>
        <taxon>Actinomycetota</taxon>
        <taxon>Actinomycetes</taxon>
        <taxon>Mycobacteriales</taxon>
        <taxon>Mycobacteriaceae</taxon>
        <taxon>Mycobacterium</taxon>
        <taxon>Mycobacterium tuberculosis complex</taxon>
    </lineage>
</organism>
<reference key="1">
    <citation type="journal article" date="2002" name="J. Bacteriol.">
        <title>Whole-genome comparison of Mycobacterium tuberculosis clinical and laboratory strains.</title>
        <authorList>
            <person name="Fleischmann R.D."/>
            <person name="Alland D."/>
            <person name="Eisen J.A."/>
            <person name="Carpenter L."/>
            <person name="White O."/>
            <person name="Peterson J.D."/>
            <person name="DeBoy R.T."/>
            <person name="Dodson R.J."/>
            <person name="Gwinn M.L."/>
            <person name="Haft D.H."/>
            <person name="Hickey E.K."/>
            <person name="Kolonay J.F."/>
            <person name="Nelson W.C."/>
            <person name="Umayam L.A."/>
            <person name="Ermolaeva M.D."/>
            <person name="Salzberg S.L."/>
            <person name="Delcher A."/>
            <person name="Utterback T.R."/>
            <person name="Weidman J.F."/>
            <person name="Khouri H.M."/>
            <person name="Gill J."/>
            <person name="Mikula A."/>
            <person name="Bishai W."/>
            <person name="Jacobs W.R. Jr."/>
            <person name="Venter J.C."/>
            <person name="Fraser C.M."/>
        </authorList>
    </citation>
    <scope>NUCLEOTIDE SEQUENCE [LARGE SCALE GENOMIC DNA]</scope>
    <source>
        <strain>CDC 1551 / Oshkosh</strain>
    </source>
</reference>
<comment type="catalytic activity">
    <reaction>
        <text>a uridine in RNA = a pseudouridine in RNA</text>
        <dbReference type="Rhea" id="RHEA:48348"/>
        <dbReference type="Rhea" id="RHEA-COMP:12068"/>
        <dbReference type="Rhea" id="RHEA-COMP:12069"/>
        <dbReference type="ChEBI" id="CHEBI:65314"/>
        <dbReference type="ChEBI" id="CHEBI:65315"/>
    </reaction>
</comment>
<comment type="similarity">
    <text evidence="3">Belongs to the pseudouridine synthase RluA family.</text>
</comment>
<name>Y1540_MYCTO</name>
<gene>
    <name type="ordered locus">MT1592</name>
</gene>